<proteinExistence type="evidence at protein level"/>
<sequence>MSDYENDDECWSALESFRVKLISVIDPSRITPYLRQCKVLNPDDEEQVLSDPNLVIRKRKVGVLLDILQRTGHKGYVAFLESLELYYPQLYRKVTGKEPARVFSMIIDASGESGLTQLLMTEVMKLQKKVQDLTALLSSKDDFIKELRVKDSLLRKHQERVQRLKEECELSSAELKRCKDENYDLAMRLAHLSEEKGAALMRNRDLQLEVDQLRHSLMKAEDDCKVERKHTLKLRHAMEQRPSQELLWDLQQERDLLQARVQELEVSVQEGKLHRNSPYIQVLEEDWRQALQEHQEQASTIFSLRKDLRQAEALRTRCMEEKEMFELQCLALRKDAKMYKDRIEAILQQMEEVSIERDQAMTSREELHAQCAQSFQDKDKLRKQVRELDEKADELQLQLFQTESRLLAAEGRLKQQQLDMLILSSDLEDSSPRNSQELSLPQDLEEDAQLSDKGVLADRESPEQPFVVLNKKHLSQTHDTVPSSSEPPEKERRRLKESFENYRRKRALRKMQNSWRQGEGDHGNTTGSDNTDTEGS</sequence>
<organism>
    <name type="scientific">Rattus norvegicus</name>
    <name type="common">Rat</name>
    <dbReference type="NCBI Taxonomy" id="10116"/>
    <lineage>
        <taxon>Eukaryota</taxon>
        <taxon>Metazoa</taxon>
        <taxon>Chordata</taxon>
        <taxon>Craniata</taxon>
        <taxon>Vertebrata</taxon>
        <taxon>Euteleostomi</taxon>
        <taxon>Mammalia</taxon>
        <taxon>Eutheria</taxon>
        <taxon>Euarchontoglires</taxon>
        <taxon>Glires</taxon>
        <taxon>Rodentia</taxon>
        <taxon>Myomorpha</taxon>
        <taxon>Muroidea</taxon>
        <taxon>Muridae</taxon>
        <taxon>Murinae</taxon>
        <taxon>Rattus</taxon>
    </lineage>
</organism>
<comment type="function">
    <text evidence="1 6">Adapter protein that plays a key role in innate immune response against fungi by forming signaling complexes downstream of C-type lectin receptors (By similarity). CARD9-mediated signals are essential for antifungal immunity against a subset of fungi from the phylum Ascomycota (By similarity). Transduces signals in myeloid cells downstream of C-type lectin receptors CLEC7A (dectin-1), CLEC6A (dectin-2) and CLEC4E (Mincle), which detect pathogen-associated molecular pattern metabolites (PAMPs), such as fungal carbohydrates, and trigger CARD9 activation (PubMed:17936701). Upon activation, CARD9 homooligomerizes to form a nucleating helical template that recruits BCL10 via CARD-CARD interaction, thereby promoting polymerization of BCL10 and subsequent recruitment of MALT1: this leads to activation of NF-kappa-B and MAP kinase p38 (MAPK11, MAPK12, MAPK13 and/or MAPK14) pathways which stimulate expression of genes encoding pro-inflammatory cytokines and chemokines (PubMed:17936701). CARD9 signaling in antigen-presenting cells links innate sensing of fungi to the activation of adaptive immunity and provides a cytokine milieu that induces the development and subsequent of interleukin 17-producing T helper (Th17) cells (By similarity). Also involved in activation of myeloid cells via classical ITAM-associated receptors and TLR: required for TLR-mediated activation of MAPK, while it is not required for TLR-induced activation of NF-kappa-B (By similarity). CARD9 can also be engaged independently of BCL10: forms a complex with RASGRF1 downstream of C-type lectin receptors, which recruits and activates HRAS, leading to ERK activation and the production of cytokines (By similarity). Acts as an important regulator of the intestinal commensal fungi (mycobiota) component of the gut microbiota (By similarity). Plays an essential role in antifungal immunity against dissemination of gut fungi: acts by promoting induction of antifungal IgG antibodies response in CX3CR1(+) macrophages to confer protection against disseminated C.albicans or C.auris infection (By similarity). Also mediates immunity against other pathogens, such as certain bacteria, viruses and parasites; CARD9 signaling is however redundant with other innate immune responses (By similarity). In response to L.monocytogenes infection, required for the production of inflammatory cytokines activated by intracellular peptidoglycan: acts by connecting NOD2 recognition of peptidoglycan to downstream activation of MAP kinases (MAPK) without activating NF-kappa-B (By similarity).</text>
</comment>
<comment type="activity regulation">
    <text evidence="1 2">Maintained in an autoinhibited state via homodimerization in which the CARD domain forms an extensive interaction with the adjacent linker and coiled-coil regions (By similarity). Activation downstream of C-type lectin receptors, by phosphorylation by PRKCD and/or ubiquitination by TRIM62, triggers disruption of the CARD domain-coiled coil interface, CARD9 homooligomerization and BCL10 recruitment, followed by activation of NF-kappa-B and MAP kinase p38 pathways (By similarity). Zinc-binding inhibits activation by stabilizing the CARD ground-state conformation and restricting its capacity to form BCL10-nucleating filaments (By similarity).</text>
</comment>
<comment type="subunit">
    <text evidence="1 2 6">Monomer. Homodimer; homodimerization is mediated by the CARD domain which forms an extensive interaction with the adjacent linker and coiled-coil regions; leads to an autoinhibited state. Homomultimer; polymerizes following activation, forming a nucleating helical template that seeds BCL10-filament formation via a CARD-CARD interaction (By similarity). Interacts (via CARD domain) with BCL10 (via CARD domain); interaction takes place following CARD9 activation and polymerization, leading to the formation of a filamentous CBM complex assembly. Component of a CBM complex (CARD9-BCL10, MALT1), composed of CARD9, BCL10 and MALT1. Interacts with RASGRF1. Interacts with NOD2 (via NACHT domain); interaction is direct. Interacts with RIPK2 (By similarity). Interacts with VHL; without leading to protein degradation (PubMed:17936701).</text>
</comment>
<comment type="subcellular location">
    <subcellularLocation>
        <location evidence="2">Cytoplasm</location>
    </subcellularLocation>
</comment>
<comment type="domain">
    <text evidence="2">The linker region, also named autoinhibitory interface, is required to prevent constitutive activation and maintain CARD9 in an autoinhibitory state. Disruption of this region triggers polymerization and activation, leading to formation of BCL10-nucleating filaments.</text>
</comment>
<comment type="PTM">
    <text evidence="1 6">Phosphorylated at Thr-231 by PRKCD downstream of C-type lectin receptors activation: phosphorylation promotes interaction with BCL10, followed by activation of NF-kappa-B and MAP kinase p38 pathways (By similarity). Phosphorylated at Thr-531 and Thr-533 by CK2 following interaction with VHL, leading to inhibit the ability to activate NF-kappa-B (PubMed:17936701).</text>
</comment>
<comment type="PTM">
    <text evidence="2">Ubiquitinated at Lys-125 via 'Lys-27'-linked ubiquitin by TRIM62 downstream of C-type lectin receptors activation; leading to CARD9 activation, followed by activation of NF-kappa-B and MAP kinase p38 pathways. Deubiquitinated at Lys-125 by USP15, inhibiting CARD9.</text>
</comment>
<accession>Q9EPY0</accession>
<accession>F1LQK8</accession>
<reference key="1">
    <citation type="journal article" date="2000" name="J. Biol. Chem.">
        <title>CARD9 is a novel caspase recruitment domain-containing protein that interacts with Bcl10/CLAP and activates NF-kappa B.</title>
        <authorList>
            <person name="Bertin J."/>
            <person name="Guo Y."/>
            <person name="Wang L."/>
            <person name="Srinivasula S.M."/>
            <person name="Jacobson M.D."/>
            <person name="Poyet J.-L."/>
            <person name="Merriam S."/>
            <person name="Du M.-Q."/>
            <person name="Dyer M.J.S."/>
            <person name="Robison K.E."/>
            <person name="DiStefano P.S."/>
            <person name="Alnemri E.S."/>
        </authorList>
    </citation>
    <scope>NUCLEOTIDE SEQUENCE [MRNA]</scope>
    <source>
        <strain>Sprague-Dawley</strain>
    </source>
</reference>
<reference key="2">
    <citation type="journal article" date="2004" name="Nature">
        <title>Genome sequence of the Brown Norway rat yields insights into mammalian evolution.</title>
        <authorList>
            <person name="Gibbs R.A."/>
            <person name="Weinstock G.M."/>
            <person name="Metzker M.L."/>
            <person name="Muzny D.M."/>
            <person name="Sodergren E.J."/>
            <person name="Scherer S."/>
            <person name="Scott G."/>
            <person name="Steffen D."/>
            <person name="Worley K.C."/>
            <person name="Burch P.E."/>
            <person name="Okwuonu G."/>
            <person name="Hines S."/>
            <person name="Lewis L."/>
            <person name="Deramo C."/>
            <person name="Delgado O."/>
            <person name="Dugan-Rocha S."/>
            <person name="Miner G."/>
            <person name="Morgan M."/>
            <person name="Hawes A."/>
            <person name="Gill R."/>
            <person name="Holt R.A."/>
            <person name="Adams M.D."/>
            <person name="Amanatides P.G."/>
            <person name="Baden-Tillson H."/>
            <person name="Barnstead M."/>
            <person name="Chin S."/>
            <person name="Evans C.A."/>
            <person name="Ferriera S."/>
            <person name="Fosler C."/>
            <person name="Glodek A."/>
            <person name="Gu Z."/>
            <person name="Jennings D."/>
            <person name="Kraft C.L."/>
            <person name="Nguyen T."/>
            <person name="Pfannkoch C.M."/>
            <person name="Sitter C."/>
            <person name="Sutton G.G."/>
            <person name="Venter J.C."/>
            <person name="Woodage T."/>
            <person name="Smith D."/>
            <person name="Lee H.-M."/>
            <person name="Gustafson E."/>
            <person name="Cahill P."/>
            <person name="Kana A."/>
            <person name="Doucette-Stamm L."/>
            <person name="Weinstock K."/>
            <person name="Fechtel K."/>
            <person name="Weiss R.B."/>
            <person name="Dunn D.M."/>
            <person name="Green E.D."/>
            <person name="Blakesley R.W."/>
            <person name="Bouffard G.G."/>
            <person name="De Jong P.J."/>
            <person name="Osoegawa K."/>
            <person name="Zhu B."/>
            <person name="Marra M."/>
            <person name="Schein J."/>
            <person name="Bosdet I."/>
            <person name="Fjell C."/>
            <person name="Jones S."/>
            <person name="Krzywinski M."/>
            <person name="Mathewson C."/>
            <person name="Siddiqui A."/>
            <person name="Wye N."/>
            <person name="McPherson J."/>
            <person name="Zhao S."/>
            <person name="Fraser C.M."/>
            <person name="Shetty J."/>
            <person name="Shatsman S."/>
            <person name="Geer K."/>
            <person name="Chen Y."/>
            <person name="Abramzon S."/>
            <person name="Nierman W.C."/>
            <person name="Havlak P.H."/>
            <person name="Chen R."/>
            <person name="Durbin K.J."/>
            <person name="Egan A."/>
            <person name="Ren Y."/>
            <person name="Song X.-Z."/>
            <person name="Li B."/>
            <person name="Liu Y."/>
            <person name="Qin X."/>
            <person name="Cawley S."/>
            <person name="Cooney A.J."/>
            <person name="D'Souza L.M."/>
            <person name="Martin K."/>
            <person name="Wu J.Q."/>
            <person name="Gonzalez-Garay M.L."/>
            <person name="Jackson A.R."/>
            <person name="Kalafus K.J."/>
            <person name="McLeod M.P."/>
            <person name="Milosavljevic A."/>
            <person name="Virk D."/>
            <person name="Volkov A."/>
            <person name="Wheeler D.A."/>
            <person name="Zhang Z."/>
            <person name="Bailey J.A."/>
            <person name="Eichler E.E."/>
            <person name="Tuzun E."/>
            <person name="Birney E."/>
            <person name="Mongin E."/>
            <person name="Ureta-Vidal A."/>
            <person name="Woodwark C."/>
            <person name="Zdobnov E."/>
            <person name="Bork P."/>
            <person name="Suyama M."/>
            <person name="Torrents D."/>
            <person name="Alexandersson M."/>
            <person name="Trask B.J."/>
            <person name="Young J.M."/>
            <person name="Huang H."/>
            <person name="Wang H."/>
            <person name="Xing H."/>
            <person name="Daniels S."/>
            <person name="Gietzen D."/>
            <person name="Schmidt J."/>
            <person name="Stevens K."/>
            <person name="Vitt U."/>
            <person name="Wingrove J."/>
            <person name="Camara F."/>
            <person name="Mar Alba M."/>
            <person name="Abril J.F."/>
            <person name="Guigo R."/>
            <person name="Smit A."/>
            <person name="Dubchak I."/>
            <person name="Rubin E.M."/>
            <person name="Couronne O."/>
            <person name="Poliakov A."/>
            <person name="Huebner N."/>
            <person name="Ganten D."/>
            <person name="Goesele C."/>
            <person name="Hummel O."/>
            <person name="Kreitler T."/>
            <person name="Lee Y.-A."/>
            <person name="Monti J."/>
            <person name="Schulz H."/>
            <person name="Zimdahl H."/>
            <person name="Himmelbauer H."/>
            <person name="Lehrach H."/>
            <person name="Jacob H.J."/>
            <person name="Bromberg S."/>
            <person name="Gullings-Handley J."/>
            <person name="Jensen-Seaman M.I."/>
            <person name="Kwitek A.E."/>
            <person name="Lazar J."/>
            <person name="Pasko D."/>
            <person name="Tonellato P.J."/>
            <person name="Twigger S."/>
            <person name="Ponting C.P."/>
            <person name="Duarte J.M."/>
            <person name="Rice S."/>
            <person name="Goodstadt L."/>
            <person name="Beatson S.A."/>
            <person name="Emes R.D."/>
            <person name="Winter E.E."/>
            <person name="Webber C."/>
            <person name="Brandt P."/>
            <person name="Nyakatura G."/>
            <person name="Adetobi M."/>
            <person name="Chiaromonte F."/>
            <person name="Elnitski L."/>
            <person name="Eswara P."/>
            <person name="Hardison R.C."/>
            <person name="Hou M."/>
            <person name="Kolbe D."/>
            <person name="Makova K."/>
            <person name="Miller W."/>
            <person name="Nekrutenko A."/>
            <person name="Riemer C."/>
            <person name="Schwartz S."/>
            <person name="Taylor J."/>
            <person name="Yang S."/>
            <person name="Zhang Y."/>
            <person name="Lindpaintner K."/>
            <person name="Andrews T.D."/>
            <person name="Caccamo M."/>
            <person name="Clamp M."/>
            <person name="Clarke L."/>
            <person name="Curwen V."/>
            <person name="Durbin R.M."/>
            <person name="Eyras E."/>
            <person name="Searle S.M."/>
            <person name="Cooper G.M."/>
            <person name="Batzoglou S."/>
            <person name="Brudno M."/>
            <person name="Sidow A."/>
            <person name="Stone E.A."/>
            <person name="Payseur B.A."/>
            <person name="Bourque G."/>
            <person name="Lopez-Otin C."/>
            <person name="Puente X.S."/>
            <person name="Chakrabarti K."/>
            <person name="Chatterji S."/>
            <person name="Dewey C."/>
            <person name="Pachter L."/>
            <person name="Bray N."/>
            <person name="Yap V.B."/>
            <person name="Caspi A."/>
            <person name="Tesler G."/>
            <person name="Pevzner P.A."/>
            <person name="Haussler D."/>
            <person name="Roskin K.M."/>
            <person name="Baertsch R."/>
            <person name="Clawson H."/>
            <person name="Furey T.S."/>
            <person name="Hinrichs A.S."/>
            <person name="Karolchik D."/>
            <person name="Kent W.J."/>
            <person name="Rosenbloom K.R."/>
            <person name="Trumbower H."/>
            <person name="Weirauch M."/>
            <person name="Cooper D.N."/>
            <person name="Stenson P.D."/>
            <person name="Ma B."/>
            <person name="Brent M."/>
            <person name="Arumugam M."/>
            <person name="Shteynberg D."/>
            <person name="Copley R.R."/>
            <person name="Taylor M.S."/>
            <person name="Riethman H."/>
            <person name="Mudunuri U."/>
            <person name="Peterson J."/>
            <person name="Guyer M."/>
            <person name="Felsenfeld A."/>
            <person name="Old S."/>
            <person name="Mockrin S."/>
            <person name="Collins F.S."/>
        </authorList>
    </citation>
    <scope>NUCLEOTIDE SEQUENCE [LARGE SCALE GENOMIC DNA]</scope>
    <source>
        <strain>Brown Norway</strain>
    </source>
</reference>
<reference key="3">
    <citation type="journal article" date="2007" name="Mol. Cell">
        <title>pVHL acts as an adaptor to promote the inhibitory phosphorylation of the NF-kappaB agonist Card9 by CK2.</title>
        <authorList>
            <person name="Yang H."/>
            <person name="Minamishima Y.A."/>
            <person name="Yan Q."/>
            <person name="Schlisio S."/>
            <person name="Ebert B.L."/>
            <person name="Zhang X."/>
            <person name="Zhang L."/>
            <person name="Kim W.Y."/>
            <person name="Olumi A.F."/>
            <person name="Kaelin W.G. Jr."/>
        </authorList>
    </citation>
    <scope>PHOSPHORYLATION AT THR-531 AND THR-533</scope>
    <scope>MUTAGENESIS OF THR-526; SER-528; THR-531 AND THR-533</scope>
    <scope>FUNCTION</scope>
    <scope>INTERACTION WITH VHL</scope>
</reference>
<reference key="4">
    <citation type="journal article" date="2012" name="Nat. Commun.">
        <title>Quantitative maps of protein phosphorylation sites across 14 different rat organs and tissues.</title>
        <authorList>
            <person name="Lundby A."/>
            <person name="Secher A."/>
            <person name="Lage K."/>
            <person name="Nordsborg N.B."/>
            <person name="Dmytriyev A."/>
            <person name="Lundby C."/>
            <person name="Olsen J.V."/>
        </authorList>
    </citation>
    <scope>PHOSPHORYLATION [LARGE SCALE ANALYSIS] AT SER-2; SER-424; SER-425; SER-451 AND SER-461</scope>
    <scope>IDENTIFICATION BY MASS SPECTROMETRY [LARGE SCALE ANALYSIS]</scope>
</reference>
<feature type="chain" id="PRO_0000144083" description="Caspase recruitment domain-containing protein 9">
    <location>
        <begin position="1"/>
        <end position="536"/>
    </location>
</feature>
<feature type="domain" description="CARD" evidence="4">
    <location>
        <begin position="6"/>
        <end position="98"/>
    </location>
</feature>
<feature type="region of interest" description="Linker" evidence="2">
    <location>
        <begin position="99"/>
        <end position="116"/>
    </location>
</feature>
<feature type="region of interest" description="Disordered" evidence="5">
    <location>
        <begin position="425"/>
        <end position="451"/>
    </location>
</feature>
<feature type="region of interest" description="Disordered" evidence="5">
    <location>
        <begin position="472"/>
        <end position="536"/>
    </location>
</feature>
<feature type="coiled-coil region" evidence="3">
    <location>
        <begin position="117"/>
        <end position="277"/>
    </location>
</feature>
<feature type="coiled-coil region" evidence="3">
    <location>
        <begin position="303"/>
        <end position="420"/>
    </location>
</feature>
<feature type="compositionally biased region" description="Basic and acidic residues" evidence="5">
    <location>
        <begin position="487"/>
        <end position="502"/>
    </location>
</feature>
<feature type="binding site" evidence="2">
    <location>
        <position position="3"/>
    </location>
    <ligand>
        <name>Zn(2+)</name>
        <dbReference type="ChEBI" id="CHEBI:29105"/>
    </ligand>
</feature>
<feature type="binding site" evidence="2">
    <location>
        <position position="10"/>
    </location>
    <ligand>
        <name>Zn(2+)</name>
        <dbReference type="ChEBI" id="CHEBI:29105"/>
    </ligand>
</feature>
<feature type="binding site" evidence="2">
    <location>
        <position position="73"/>
    </location>
    <ligand>
        <name>Zn(2+)</name>
        <dbReference type="ChEBI" id="CHEBI:29105"/>
    </ligand>
</feature>
<feature type="modified residue" description="Phosphoserine" evidence="9">
    <location>
        <position position="2"/>
    </location>
</feature>
<feature type="modified residue" description="Phosphothreonine" evidence="1">
    <location>
        <position position="231"/>
    </location>
</feature>
<feature type="modified residue" description="Phosphoserine" evidence="2">
    <location>
        <position position="277"/>
    </location>
</feature>
<feature type="modified residue" description="Phosphoserine" evidence="9">
    <location>
        <position position="424"/>
    </location>
</feature>
<feature type="modified residue" description="Phosphoserine" evidence="9">
    <location>
        <position position="425"/>
    </location>
</feature>
<feature type="modified residue" description="Phosphoserine" evidence="1">
    <location>
        <position position="431"/>
    </location>
</feature>
<feature type="modified residue" description="Phosphoserine" evidence="9">
    <location>
        <position position="451"/>
    </location>
</feature>
<feature type="modified residue" description="Phosphoserine" evidence="9">
    <location>
        <position position="461"/>
    </location>
</feature>
<feature type="modified residue" description="Phosphoserine" evidence="2">
    <location>
        <position position="483"/>
    </location>
</feature>
<feature type="modified residue" description="Phosphoserine" evidence="2">
    <location>
        <position position="498"/>
    </location>
</feature>
<feature type="modified residue" description="Phosphothreonine; by CK2" evidence="6">
    <location>
        <position position="531"/>
    </location>
</feature>
<feature type="modified residue" description="Phosphothreonine; by CK2" evidence="6">
    <location>
        <position position="533"/>
    </location>
</feature>
<feature type="cross-link" description="Glycyl lysine isopeptide (Lys-Gly) (interchain with G-Cter in ubiquitin)" evidence="2">
    <location>
        <position position="125"/>
    </location>
</feature>
<feature type="mutagenesis site" description="Abolished phosphorylation by CK2 and increased activation of NF-kappa-B; when associated with A-528; A-531 and A-533." evidence="6">
    <original>T</original>
    <variation>A</variation>
    <location>
        <position position="526"/>
    </location>
</feature>
<feature type="mutagenesis site" description="Abolished phosphorylation by CK2 and increased activation of NF-kappa-B; when associated with A-526; A-531 and A-533." evidence="6">
    <original>S</original>
    <variation>A</variation>
    <location>
        <position position="528"/>
    </location>
</feature>
<feature type="mutagenesis site" description="Abolished phosphorylation by CK2 and increased activation of NF-kappa-B; when associated with A-526; A-528 and A-533." evidence="6">
    <original>T</original>
    <variation>A</variation>
    <location>
        <position position="531"/>
    </location>
</feature>
<feature type="mutagenesis site" description="Abolished phosphorylation by CK2 and increased activation of NF-kappa-B; when associated with A-526; A-528 and A-531." evidence="6">
    <original>T</original>
    <variation>A</variation>
    <location>
        <position position="533"/>
    </location>
</feature>
<evidence type="ECO:0000250" key="1">
    <source>
        <dbReference type="UniProtKB" id="A2AIV8"/>
    </source>
</evidence>
<evidence type="ECO:0000250" key="2">
    <source>
        <dbReference type="UniProtKB" id="Q9H257"/>
    </source>
</evidence>
<evidence type="ECO:0000255" key="3"/>
<evidence type="ECO:0000255" key="4">
    <source>
        <dbReference type="PROSITE-ProRule" id="PRU00046"/>
    </source>
</evidence>
<evidence type="ECO:0000256" key="5">
    <source>
        <dbReference type="SAM" id="MobiDB-lite"/>
    </source>
</evidence>
<evidence type="ECO:0000269" key="6">
    <source>
    </source>
</evidence>
<evidence type="ECO:0000303" key="7">
    <source>
    </source>
</evidence>
<evidence type="ECO:0000312" key="8">
    <source>
        <dbReference type="RGD" id="708370"/>
    </source>
</evidence>
<evidence type="ECO:0007744" key="9">
    <source>
    </source>
</evidence>
<dbReference type="EMBL" id="AF311288">
    <property type="protein sequence ID" value="AAG28791.1"/>
    <property type="molecule type" value="mRNA"/>
</dbReference>
<dbReference type="EMBL" id="AABR06021907">
    <property type="status" value="NOT_ANNOTATED_CDS"/>
    <property type="molecule type" value="Genomic_DNA"/>
</dbReference>
<dbReference type="RefSeq" id="NP_071639.1">
    <property type="nucleotide sequence ID" value="NM_022303.4"/>
</dbReference>
<dbReference type="SMR" id="Q9EPY0"/>
<dbReference type="FunCoup" id="Q9EPY0">
    <property type="interactions" value="298"/>
</dbReference>
<dbReference type="STRING" id="10116.ENSRNOP00000074450"/>
<dbReference type="iPTMnet" id="Q9EPY0"/>
<dbReference type="PhosphoSitePlus" id="Q9EPY0"/>
<dbReference type="jPOST" id="Q9EPY0"/>
<dbReference type="PaxDb" id="10116-ENSRNOP00000025456"/>
<dbReference type="Ensembl" id="ENSRNOT00000091484.2">
    <property type="protein sequence ID" value="ENSRNOP00000074450.1"/>
    <property type="gene ID" value="ENSRNOG00000051470.2"/>
</dbReference>
<dbReference type="GeneID" id="64171"/>
<dbReference type="KEGG" id="rno:64171"/>
<dbReference type="UCSC" id="RGD:708370">
    <property type="organism name" value="rat"/>
</dbReference>
<dbReference type="AGR" id="RGD:708370"/>
<dbReference type="CTD" id="64170"/>
<dbReference type="RGD" id="708370">
    <property type="gene designation" value="Card9"/>
</dbReference>
<dbReference type="eggNOG" id="ENOG502R00K">
    <property type="taxonomic scope" value="Eukaryota"/>
</dbReference>
<dbReference type="GeneTree" id="ENSGT00940000160570"/>
<dbReference type="HOGENOM" id="CLU_038057_1_0_1"/>
<dbReference type="InParanoid" id="Q9EPY0"/>
<dbReference type="OrthoDB" id="57331at9989"/>
<dbReference type="Reactome" id="R-RNO-5607764">
    <property type="pathway name" value="CLEC7A (Dectin-1) signaling"/>
</dbReference>
<dbReference type="PRO" id="PR:Q9EPY0"/>
<dbReference type="Proteomes" id="UP000002494">
    <property type="component" value="Chromosome 3"/>
</dbReference>
<dbReference type="Bgee" id="ENSRNOG00000051470">
    <property type="expression patterns" value="Expressed in esophagus and 19 other cell types or tissues"/>
</dbReference>
<dbReference type="GO" id="GO:0032449">
    <property type="term" value="C:CBM complex"/>
    <property type="evidence" value="ECO:0000266"/>
    <property type="project" value="RGD"/>
</dbReference>
<dbReference type="GO" id="GO:0005737">
    <property type="term" value="C:cytoplasm"/>
    <property type="evidence" value="ECO:0000266"/>
    <property type="project" value="RGD"/>
</dbReference>
<dbReference type="GO" id="GO:0032991">
    <property type="term" value="C:protein-containing complex"/>
    <property type="evidence" value="ECO:0000266"/>
    <property type="project" value="RGD"/>
</dbReference>
<dbReference type="GO" id="GO:0050700">
    <property type="term" value="F:CARD domain binding"/>
    <property type="evidence" value="ECO:0000266"/>
    <property type="project" value="RGD"/>
</dbReference>
<dbReference type="GO" id="GO:0046872">
    <property type="term" value="F:metal ion binding"/>
    <property type="evidence" value="ECO:0007669"/>
    <property type="project" value="UniProtKB-KW"/>
</dbReference>
<dbReference type="GO" id="GO:0042803">
    <property type="term" value="F:protein homodimerization activity"/>
    <property type="evidence" value="ECO:0000266"/>
    <property type="project" value="RGD"/>
</dbReference>
<dbReference type="GO" id="GO:0035591">
    <property type="term" value="F:signaling adaptor activity"/>
    <property type="evidence" value="ECO:0000266"/>
    <property type="project" value="RGD"/>
</dbReference>
<dbReference type="GO" id="GO:0061760">
    <property type="term" value="P:antifungal innate immune response"/>
    <property type="evidence" value="ECO:0000250"/>
    <property type="project" value="UniProtKB"/>
</dbReference>
<dbReference type="GO" id="GO:0097190">
    <property type="term" value="P:apoptotic signaling pathway"/>
    <property type="evidence" value="ECO:0000266"/>
    <property type="project" value="RGD"/>
</dbReference>
<dbReference type="GO" id="GO:0050830">
    <property type="term" value="P:defense response to Gram-positive bacterium"/>
    <property type="evidence" value="ECO:0000266"/>
    <property type="project" value="RGD"/>
</dbReference>
<dbReference type="GO" id="GO:0051607">
    <property type="term" value="P:defense response to virus"/>
    <property type="evidence" value="ECO:0000266"/>
    <property type="project" value="RGD"/>
</dbReference>
<dbReference type="GO" id="GO:0048874">
    <property type="term" value="P:host-mediated regulation of intestinal microbiota composition"/>
    <property type="evidence" value="ECO:0000250"/>
    <property type="project" value="UniProtKB"/>
</dbReference>
<dbReference type="GO" id="GO:0016064">
    <property type="term" value="P:immunoglobulin mediated immune response"/>
    <property type="evidence" value="ECO:0000250"/>
    <property type="project" value="UniProtKB"/>
</dbReference>
<dbReference type="GO" id="GO:0007254">
    <property type="term" value="P:JNK cascade"/>
    <property type="evidence" value="ECO:0000266"/>
    <property type="project" value="RGD"/>
</dbReference>
<dbReference type="GO" id="GO:0002446">
    <property type="term" value="P:neutrophil mediated immunity"/>
    <property type="evidence" value="ECO:0000250"/>
    <property type="project" value="UniProtKB"/>
</dbReference>
<dbReference type="GO" id="GO:0043123">
    <property type="term" value="P:positive regulation of canonical NF-kappaB signal transduction"/>
    <property type="evidence" value="ECO:0000266"/>
    <property type="project" value="RGD"/>
</dbReference>
<dbReference type="GO" id="GO:0032722">
    <property type="term" value="P:positive regulation of chemokine production"/>
    <property type="evidence" value="ECO:0000266"/>
    <property type="project" value="RGD"/>
</dbReference>
<dbReference type="GO" id="GO:0001819">
    <property type="term" value="P:positive regulation of cytokine production"/>
    <property type="evidence" value="ECO:0000250"/>
    <property type="project" value="UniProtKB"/>
</dbReference>
<dbReference type="GO" id="GO:1900017">
    <property type="term" value="P:positive regulation of cytokine production involved in inflammatory response"/>
    <property type="evidence" value="ECO:0000250"/>
    <property type="project" value="UniProtKB"/>
</dbReference>
<dbReference type="GO" id="GO:0070374">
    <property type="term" value="P:positive regulation of ERK1 and ERK2 cascade"/>
    <property type="evidence" value="ECO:0000250"/>
    <property type="project" value="UniProtKB"/>
</dbReference>
<dbReference type="GO" id="GO:0032725">
    <property type="term" value="P:positive regulation of granulocyte macrophage colony-stimulating factor production"/>
    <property type="evidence" value="ECO:0000250"/>
    <property type="project" value="UniProtKB"/>
</dbReference>
<dbReference type="GO" id="GO:0045089">
    <property type="term" value="P:positive regulation of innate immune response"/>
    <property type="evidence" value="ECO:0000266"/>
    <property type="project" value="RGD"/>
</dbReference>
<dbReference type="GO" id="GO:0032740">
    <property type="term" value="P:positive regulation of interleukin-17 production"/>
    <property type="evidence" value="ECO:0000250"/>
    <property type="project" value="UniProtKB"/>
</dbReference>
<dbReference type="GO" id="GO:0032755">
    <property type="term" value="P:positive regulation of interleukin-6 production"/>
    <property type="evidence" value="ECO:0000250"/>
    <property type="project" value="UniProtKB"/>
</dbReference>
<dbReference type="GO" id="GO:0046330">
    <property type="term" value="P:positive regulation of JNK cascade"/>
    <property type="evidence" value="ECO:0000266"/>
    <property type="project" value="RGD"/>
</dbReference>
<dbReference type="GO" id="GO:0060907">
    <property type="term" value="P:positive regulation of macrophage cytokine production"/>
    <property type="evidence" value="ECO:0000266"/>
    <property type="project" value="RGD"/>
</dbReference>
<dbReference type="GO" id="GO:0051092">
    <property type="term" value="P:positive regulation of NF-kappaB transcription factor activity"/>
    <property type="evidence" value="ECO:0000250"/>
    <property type="project" value="UniProtKB"/>
</dbReference>
<dbReference type="GO" id="GO:0032874">
    <property type="term" value="P:positive regulation of stress-activated MAPK cascade"/>
    <property type="evidence" value="ECO:0000250"/>
    <property type="project" value="UniProtKB"/>
</dbReference>
<dbReference type="GO" id="GO:2000318">
    <property type="term" value="P:positive regulation of T-helper 17 type immune response"/>
    <property type="evidence" value="ECO:0000266"/>
    <property type="project" value="RGD"/>
</dbReference>
<dbReference type="GO" id="GO:0032760">
    <property type="term" value="P:positive regulation of tumor necrosis factor production"/>
    <property type="evidence" value="ECO:0000266"/>
    <property type="project" value="RGD"/>
</dbReference>
<dbReference type="GO" id="GO:0051260">
    <property type="term" value="P:protein homooligomerization"/>
    <property type="evidence" value="ECO:0000250"/>
    <property type="project" value="UniProtKB"/>
</dbReference>
<dbReference type="GO" id="GO:0042981">
    <property type="term" value="P:regulation of apoptotic process"/>
    <property type="evidence" value="ECO:0007669"/>
    <property type="project" value="InterPro"/>
</dbReference>
<dbReference type="GO" id="GO:0050776">
    <property type="term" value="P:regulation of immune response"/>
    <property type="evidence" value="ECO:0000318"/>
    <property type="project" value="GO_Central"/>
</dbReference>
<dbReference type="GO" id="GO:0032663">
    <property type="term" value="P:regulation of interleukin-2 production"/>
    <property type="evidence" value="ECO:0000266"/>
    <property type="project" value="RGD"/>
</dbReference>
<dbReference type="GO" id="GO:0032675">
    <property type="term" value="P:regulation of interleukin-6 production"/>
    <property type="evidence" value="ECO:0000266"/>
    <property type="project" value="RGD"/>
</dbReference>
<dbReference type="GO" id="GO:0032680">
    <property type="term" value="P:regulation of tumor necrosis factor production"/>
    <property type="evidence" value="ECO:0000266"/>
    <property type="project" value="RGD"/>
</dbReference>
<dbReference type="GO" id="GO:1904044">
    <property type="term" value="P:response to aldosterone"/>
    <property type="evidence" value="ECO:0000270"/>
    <property type="project" value="RGD"/>
</dbReference>
<dbReference type="GO" id="GO:0043330">
    <property type="term" value="P:response to exogenous dsRNA"/>
    <property type="evidence" value="ECO:0000266"/>
    <property type="project" value="RGD"/>
</dbReference>
<dbReference type="GO" id="GO:0009620">
    <property type="term" value="P:response to fungus"/>
    <property type="evidence" value="ECO:0000266"/>
    <property type="project" value="RGD"/>
</dbReference>
<dbReference type="GO" id="GO:0032495">
    <property type="term" value="P:response to muramyl dipeptide"/>
    <property type="evidence" value="ECO:0000266"/>
    <property type="project" value="RGD"/>
</dbReference>
<dbReference type="GO" id="GO:0032494">
    <property type="term" value="P:response to peptidoglycan"/>
    <property type="evidence" value="ECO:0000266"/>
    <property type="project" value="RGD"/>
</dbReference>
<dbReference type="GO" id="GO:0009410">
    <property type="term" value="P:response to xenobiotic stimulus"/>
    <property type="evidence" value="ECO:0000266"/>
    <property type="project" value="RGD"/>
</dbReference>
<dbReference type="GO" id="GO:0051403">
    <property type="term" value="P:stress-activated MAPK cascade"/>
    <property type="evidence" value="ECO:0000266"/>
    <property type="project" value="RGD"/>
</dbReference>
<dbReference type="CDD" id="cd08809">
    <property type="entry name" value="CARD_CARD9"/>
    <property type="match status" value="1"/>
</dbReference>
<dbReference type="FunFam" id="1.10.533.10:FF:000003">
    <property type="entry name" value="Caspase recruitment domain family, member 11"/>
    <property type="match status" value="1"/>
</dbReference>
<dbReference type="Gene3D" id="1.10.533.10">
    <property type="entry name" value="Death Domain, Fas"/>
    <property type="match status" value="1"/>
</dbReference>
<dbReference type="InterPro" id="IPR001315">
    <property type="entry name" value="CARD"/>
</dbReference>
<dbReference type="InterPro" id="IPR042142">
    <property type="entry name" value="CARD_CARD9"/>
</dbReference>
<dbReference type="InterPro" id="IPR011029">
    <property type="entry name" value="DEATH-like_dom_sf"/>
</dbReference>
<dbReference type="PANTHER" id="PTHR14559">
    <property type="entry name" value="CASPASE RECRUITMENT DOMAIN FAMILY"/>
    <property type="match status" value="1"/>
</dbReference>
<dbReference type="PANTHER" id="PTHR14559:SF3">
    <property type="entry name" value="CASPASE RECRUITMENT DOMAIN-CONTAINING PROTEIN 9"/>
    <property type="match status" value="1"/>
</dbReference>
<dbReference type="Pfam" id="PF00619">
    <property type="entry name" value="CARD"/>
    <property type="match status" value="1"/>
</dbReference>
<dbReference type="SUPFAM" id="SSF47986">
    <property type="entry name" value="DEATH domain"/>
    <property type="match status" value="1"/>
</dbReference>
<dbReference type="PROSITE" id="PS50209">
    <property type="entry name" value="CARD"/>
    <property type="match status" value="1"/>
</dbReference>
<keyword id="KW-1064">Adaptive immunity</keyword>
<keyword id="KW-0175">Coiled coil</keyword>
<keyword id="KW-0963">Cytoplasm</keyword>
<keyword id="KW-0391">Immunity</keyword>
<keyword id="KW-0399">Innate immunity</keyword>
<keyword id="KW-1017">Isopeptide bond</keyword>
<keyword id="KW-0479">Metal-binding</keyword>
<keyword id="KW-0597">Phosphoprotein</keyword>
<keyword id="KW-1185">Reference proteome</keyword>
<keyword id="KW-0832">Ubl conjugation</keyword>
<keyword id="KW-0862">Zinc</keyword>
<name>CARD9_RAT</name>
<protein>
    <recommendedName>
        <fullName evidence="7">Caspase recruitment domain-containing protein 9</fullName>
        <shortName evidence="7">rCARD9</shortName>
    </recommendedName>
</protein>
<gene>
    <name evidence="7 8" type="primary">Card9</name>
</gene>